<accession>Q05B87</accession>
<proteinExistence type="evidence at transcript level"/>
<name>FRDA_BOVIN</name>
<sequence>MWTLGRRSVASFLPRSALPGFAPTRAGAPRPAKDLSLSGLPGLRIGTAKAPARSQSSLSLRCLNQTLDVKKQSVCWINLRTAGTLGDAGTLDDTTYERLAEETLDSLAEFFEDLADKPYTFEDYDVSFGSGVLTVKLGGDLGTYVINKQTPNKQIWLSSPSSGPKRYDWTGRNWVYSHDGVSLHELLATELTQALKTKLDLSALAYSGKDTCCPAQC</sequence>
<gene>
    <name evidence="3" type="primary">FXN</name>
    <name type="synonym">FRDA</name>
</gene>
<comment type="function">
    <molecule>Frataxin mature form</molecule>
    <text evidence="3 4">Functions as an activator of persulfide transfer to the scaffoding protein ISCU as component of the core iron-sulfur cluster (ISC) assembly complex and participates to the [2Fe-2S] cluster assembly. Accelerates sulfur transfer from NFS1 persulfide intermediate to ISCU and to small thiols such as L-cysteine and glutathione leading to persulfuration of these thiols and ultimately sulfide release. Binds ferrous ion and is released from FXN upon the addition of both L-cysteine and reduced FDX2 during [2Fe-2S] cluster assembly (By similarity). The core iron-sulfur cluster (ISC) assembly complex is involved in the de novo synthesis of a [2Fe-2S] cluster, the first step of the mitochondrial iron-sulfur protein biogenesis. This process is initiated by the cysteine desulfurase complex (NFS1:LYRM4:NDUFAB1) that produces persulfide which is delivered on the scaffold protein ISCU in a FXN-dependent manner. Then this complex is stabilized by FDX2 which provides reducing equivalents to accomplish the [2Fe-2S] cluster assembly. Finally, the [2Fe-2S] cluster is transferred from ISCU to chaperone proteins, including HSCB, HSPA9 and GLRX5 (By similarity). May play a role in the protection against iron-catalyzed oxidative stress through its ability to catalyze the oxidation of Fe(2+) to Fe(3+); the oligomeric form but not the monomeric form has in vitro ferroxidase activity. May be able to store large amounts of iron in the form of a ferrihydrite mineral by oligomerization; however, the physiological relevance is unsure as reports are conflicting and the function has only been shown using heterologous overexpression systems. May function as an iron chaperone protein that protects the aconitase [4Fe-4S]2+ cluster from disassembly and promotes enzyme reactivation. May play a role as a high affinity iron binding partner for FECH that is capable of both delivering iron to ferrochelatase and mediating the terminal step in mitochondrial heme biosynthesis (By similarity).</text>
</comment>
<comment type="function">
    <molecule>Extramitochondrial frataxin</molecule>
    <text evidence="3">Modulates the RNA-binding activity of ACO1. May be involved in the cytoplasmic iron-sulfur protein biogenesis. May contribute to oxidative stress resistance and overall cell survival.</text>
</comment>
<comment type="catalytic activity">
    <molecule>Frataxin mature form</molecule>
    <reaction evidence="3">
        <text>4 Fe(2+) + O2 + 4 H(+) = 4 Fe(3+) + 2 H2O</text>
        <dbReference type="Rhea" id="RHEA:11148"/>
        <dbReference type="ChEBI" id="CHEBI:15377"/>
        <dbReference type="ChEBI" id="CHEBI:15378"/>
        <dbReference type="ChEBI" id="CHEBI:15379"/>
        <dbReference type="ChEBI" id="CHEBI:29033"/>
        <dbReference type="ChEBI" id="CHEBI:29034"/>
        <dbReference type="EC" id="1.16.3.1"/>
    </reaction>
</comment>
<comment type="subunit">
    <molecule>Frataxin mature form</molecule>
    <text evidence="2 3">Component of the mitochondrial core iron-sulfur cluster (ISC) complex composed of NFS1, LYRM4, NDUFAB1, ISCU, FXN, and FDX2; this complex is a heterohexamer containing two copies of each monomer. Homodimer. Monomer (probable predominant form). Oligomer. Monomers and polymeric aggregates of &gt;1 MDa have been isolated from mitochondria. A small fraction of heterologous overexpressed recombinant frataxin forms high-molecular weight aggregates that incorporate iron. Interacts with LYRM4. Interacts (via ferrous form) with ISCU; the interaction is possible when both are bound to the dimeric form of the cysteine desulfurase complex (NFS1:LYRM4) and the interaction enhances FXN interaction to the dimeric form of the cysteine desulfurase complex (NFS1:LYRM4) (By similarity). Interacts with FECH; one iron-bound FXN monomer seems to interact with a FECH homodimer. Interacts with SDHA and SDHB (By similarity). Interacts with ACO2; the interaction is dependent on citrate (By similarity). Interacts with HSPA9 (By similarity).</text>
</comment>
<comment type="subunit">
    <molecule>Extramitochondrial frataxin</molecule>
    <text evidence="3">Interacts with ACO1. Interacts with ISCU (cytoplasmic form).</text>
</comment>
<comment type="subcellular location">
    <molecule>Frataxin mature form</molecule>
    <subcellularLocation>
        <location evidence="3">Mitochondrion</location>
    </subcellularLocation>
</comment>
<comment type="subcellular location">
    <molecule>Extramitochondrial frataxin</molecule>
    <subcellularLocation>
        <location evidence="3">Cytoplasm</location>
        <location evidence="3">Cytosol</location>
    </subcellularLocation>
</comment>
<comment type="PTM">
    <molecule>Frataxin mature form</molecule>
    <text evidence="3">Processed in two steps by mitochondrial processing peptidase (MPP). MPP first cleaves the precursor to intermediate form and subsequently converts the intermediate to yield frataxin mature form (frataxin(81-210)) which is the predominant form. The additional forms, frataxin(56-210) and frataxin(78-210), seem to be produced when the normal maturation process is impaired; their physiological relevance is unsure.</text>
</comment>
<comment type="similarity">
    <text evidence="5">Belongs to the frataxin family.</text>
</comment>
<evidence type="ECO:0000250" key="1"/>
<evidence type="ECO:0000250" key="2">
    <source>
        <dbReference type="UniProtKB" id="D3ZYW7"/>
    </source>
</evidence>
<evidence type="ECO:0000250" key="3">
    <source>
        <dbReference type="UniProtKB" id="Q16595"/>
    </source>
</evidence>
<evidence type="ECO:0000250" key="4">
    <source>
        <dbReference type="UniProtKB" id="Q9H1K1"/>
    </source>
</evidence>
<evidence type="ECO:0000305" key="5"/>
<dbReference type="EC" id="1.16.3.1" evidence="3"/>
<dbReference type="EMBL" id="BC122620">
    <property type="protein sequence ID" value="AAI22621.1"/>
    <property type="molecule type" value="mRNA"/>
</dbReference>
<dbReference type="RefSeq" id="NP_001074196.1">
    <property type="nucleotide sequence ID" value="NM_001080727.1"/>
</dbReference>
<dbReference type="SMR" id="Q05B87"/>
<dbReference type="FunCoup" id="Q05B87">
    <property type="interactions" value="1640"/>
</dbReference>
<dbReference type="STRING" id="9913.ENSBTAP00000001725"/>
<dbReference type="PaxDb" id="9913-ENSBTAP00000001725"/>
<dbReference type="GeneID" id="505694"/>
<dbReference type="KEGG" id="bta:505694"/>
<dbReference type="CTD" id="2395"/>
<dbReference type="VEuPathDB" id="HostDB:ENSBTAG00000001306"/>
<dbReference type="eggNOG" id="KOG3413">
    <property type="taxonomic scope" value="Eukaryota"/>
</dbReference>
<dbReference type="HOGENOM" id="CLU_080880_1_0_1"/>
<dbReference type="InParanoid" id="Q05B87"/>
<dbReference type="OMA" id="QSVHLMN"/>
<dbReference type="OrthoDB" id="1897642at2759"/>
<dbReference type="TreeFam" id="TF318958"/>
<dbReference type="Reactome" id="R-BTA-1268020">
    <property type="pathway name" value="Mitochondrial protein import"/>
</dbReference>
<dbReference type="Reactome" id="R-BTA-1362409">
    <property type="pathway name" value="Mitochondrial iron-sulfur cluster biogenesis"/>
</dbReference>
<dbReference type="Reactome" id="R-BTA-9854311">
    <property type="pathway name" value="Maturation of TCA enzymes and regulation of TCA cycle"/>
</dbReference>
<dbReference type="Reactome" id="R-BTA-9865881">
    <property type="pathway name" value="Complex III assembly"/>
</dbReference>
<dbReference type="Proteomes" id="UP000009136">
    <property type="component" value="Chromosome 8"/>
</dbReference>
<dbReference type="Bgee" id="ENSBTAG00000001306">
    <property type="expression patterns" value="Expressed in supraspinatus muscle and 105 other cell types or tissues"/>
</dbReference>
<dbReference type="GO" id="GO:0099128">
    <property type="term" value="C:mitochondrial [2Fe-2S] assembly complex"/>
    <property type="evidence" value="ECO:0000250"/>
    <property type="project" value="UniProtKB"/>
</dbReference>
<dbReference type="GO" id="GO:0005739">
    <property type="term" value="C:mitochondrion"/>
    <property type="evidence" value="ECO:0000250"/>
    <property type="project" value="UniProtKB"/>
</dbReference>
<dbReference type="GO" id="GO:0051537">
    <property type="term" value="F:2 iron, 2 sulfur cluster binding"/>
    <property type="evidence" value="ECO:0000318"/>
    <property type="project" value="GO_Central"/>
</dbReference>
<dbReference type="GO" id="GO:0008199">
    <property type="term" value="F:ferric iron binding"/>
    <property type="evidence" value="ECO:0000318"/>
    <property type="project" value="GO_Central"/>
</dbReference>
<dbReference type="GO" id="GO:0008198">
    <property type="term" value="F:ferrous iron binding"/>
    <property type="evidence" value="ECO:0000318"/>
    <property type="project" value="GO_Central"/>
</dbReference>
<dbReference type="GO" id="GO:0004322">
    <property type="term" value="F:ferroxidase activity"/>
    <property type="evidence" value="ECO:0000318"/>
    <property type="project" value="GO_Central"/>
</dbReference>
<dbReference type="GO" id="GO:0034986">
    <property type="term" value="F:iron chaperone activity"/>
    <property type="evidence" value="ECO:0000318"/>
    <property type="project" value="GO_Central"/>
</dbReference>
<dbReference type="GO" id="GO:0044571">
    <property type="term" value="P:[2Fe-2S] cluster assembly"/>
    <property type="evidence" value="ECO:0000250"/>
    <property type="project" value="UniProtKB"/>
</dbReference>
<dbReference type="GO" id="GO:0044572">
    <property type="term" value="P:[4Fe-4S] cluster assembly"/>
    <property type="evidence" value="ECO:0000250"/>
    <property type="project" value="UniProtKB"/>
</dbReference>
<dbReference type="GO" id="GO:0006783">
    <property type="term" value="P:heme biosynthetic process"/>
    <property type="evidence" value="ECO:0007669"/>
    <property type="project" value="UniProtKB-KW"/>
</dbReference>
<dbReference type="GO" id="GO:0006879">
    <property type="term" value="P:intracellular iron ion homeostasis"/>
    <property type="evidence" value="ECO:0007669"/>
    <property type="project" value="UniProtKB-KW"/>
</dbReference>
<dbReference type="GO" id="GO:0006826">
    <property type="term" value="P:iron ion transport"/>
    <property type="evidence" value="ECO:0007669"/>
    <property type="project" value="UniProtKB-KW"/>
</dbReference>
<dbReference type="GO" id="GO:0016226">
    <property type="term" value="P:iron-sulfur cluster assembly"/>
    <property type="evidence" value="ECO:0000318"/>
    <property type="project" value="GO_Central"/>
</dbReference>
<dbReference type="CDD" id="cd00503">
    <property type="entry name" value="Frataxin"/>
    <property type="match status" value="1"/>
</dbReference>
<dbReference type="FunFam" id="3.30.920.10:FF:000002">
    <property type="entry name" value="Frataxin, mitochondrial"/>
    <property type="match status" value="1"/>
</dbReference>
<dbReference type="Gene3D" id="3.30.920.10">
    <property type="entry name" value="Frataxin/CyaY"/>
    <property type="match status" value="1"/>
</dbReference>
<dbReference type="InterPro" id="IPR017789">
    <property type="entry name" value="Frataxin"/>
</dbReference>
<dbReference type="InterPro" id="IPR002908">
    <property type="entry name" value="Frataxin/CyaY"/>
</dbReference>
<dbReference type="InterPro" id="IPR036524">
    <property type="entry name" value="Frataxin/CyaY_sf"/>
</dbReference>
<dbReference type="InterPro" id="IPR020895">
    <property type="entry name" value="Frataxin_CS"/>
</dbReference>
<dbReference type="NCBIfam" id="TIGR03421">
    <property type="entry name" value="FeS_CyaY"/>
    <property type="match status" value="1"/>
</dbReference>
<dbReference type="NCBIfam" id="TIGR03422">
    <property type="entry name" value="mito_frataxin"/>
    <property type="match status" value="1"/>
</dbReference>
<dbReference type="PANTHER" id="PTHR16821">
    <property type="entry name" value="FRATAXIN"/>
    <property type="match status" value="1"/>
</dbReference>
<dbReference type="PANTHER" id="PTHR16821:SF2">
    <property type="entry name" value="FRATAXIN, MITOCHONDRIAL"/>
    <property type="match status" value="1"/>
</dbReference>
<dbReference type="Pfam" id="PF01491">
    <property type="entry name" value="Frataxin_Cyay"/>
    <property type="match status" value="1"/>
</dbReference>
<dbReference type="PRINTS" id="PR00904">
    <property type="entry name" value="FRATAXIN"/>
</dbReference>
<dbReference type="SMART" id="SM01219">
    <property type="entry name" value="Frataxin_Cyay"/>
    <property type="match status" value="1"/>
</dbReference>
<dbReference type="SUPFAM" id="SSF55387">
    <property type="entry name" value="Frataxin/Nqo15-like"/>
    <property type="match status" value="1"/>
</dbReference>
<dbReference type="PROSITE" id="PS01344">
    <property type="entry name" value="FRATAXIN_1"/>
    <property type="match status" value="1"/>
</dbReference>
<dbReference type="PROSITE" id="PS50810">
    <property type="entry name" value="FRATAXIN_2"/>
    <property type="match status" value="1"/>
</dbReference>
<feature type="transit peptide" description="Mitochondrion" evidence="1">
    <location>
        <begin position="1"/>
        <end position="42"/>
    </location>
</feature>
<feature type="chain" id="PRO_0000289330" description="Frataxin intermediate form">
    <location>
        <begin position="43"/>
        <end position="217"/>
    </location>
</feature>
<feature type="chain" id="PRO_0000399387" description="Frataxin mature form" evidence="1">
    <location>
        <begin position="82"/>
        <end position="217"/>
    </location>
</feature>
<feature type="chain" id="PRO_0000456946" description="Extramitochondrial frataxin" evidence="3">
    <location>
        <begin position="82"/>
        <end position="211"/>
    </location>
</feature>
<protein>
    <recommendedName>
        <fullName evidence="3">Frataxin, mitochondrial</fullName>
        <shortName>Fxn</shortName>
        <ecNumber evidence="3">1.16.3.1</ecNumber>
    </recommendedName>
    <component>
        <recommendedName>
            <fullName>Frataxin intermediate form</fullName>
        </recommendedName>
    </component>
    <component>
        <recommendedName>
            <fullName>Frataxin mature form</fullName>
        </recommendedName>
    </component>
    <component>
        <recommendedName>
            <fullName evidence="3">Extramitochondrial frataxin</fullName>
        </recommendedName>
    </component>
</protein>
<keyword id="KW-0963">Cytoplasm</keyword>
<keyword id="KW-0350">Heme biosynthesis</keyword>
<keyword id="KW-0406">Ion transport</keyword>
<keyword id="KW-0408">Iron</keyword>
<keyword id="KW-0409">Iron storage</keyword>
<keyword id="KW-0410">Iron transport</keyword>
<keyword id="KW-0496">Mitochondrion</keyword>
<keyword id="KW-0560">Oxidoreductase</keyword>
<keyword id="KW-1185">Reference proteome</keyword>
<keyword id="KW-0809">Transit peptide</keyword>
<keyword id="KW-0813">Transport</keyword>
<reference key="1">
    <citation type="submission" date="2006-08" db="EMBL/GenBank/DDBJ databases">
        <authorList>
            <consortium name="NIH - Mammalian Gene Collection (MGC) project"/>
        </authorList>
    </citation>
    <scope>NUCLEOTIDE SEQUENCE [LARGE SCALE MRNA]</scope>
    <source>
        <strain>Hereford</strain>
        <tissue>Thalamus</tissue>
    </source>
</reference>
<organism>
    <name type="scientific">Bos taurus</name>
    <name type="common">Bovine</name>
    <dbReference type="NCBI Taxonomy" id="9913"/>
    <lineage>
        <taxon>Eukaryota</taxon>
        <taxon>Metazoa</taxon>
        <taxon>Chordata</taxon>
        <taxon>Craniata</taxon>
        <taxon>Vertebrata</taxon>
        <taxon>Euteleostomi</taxon>
        <taxon>Mammalia</taxon>
        <taxon>Eutheria</taxon>
        <taxon>Laurasiatheria</taxon>
        <taxon>Artiodactyla</taxon>
        <taxon>Ruminantia</taxon>
        <taxon>Pecora</taxon>
        <taxon>Bovidae</taxon>
        <taxon>Bovinae</taxon>
        <taxon>Bos</taxon>
    </lineage>
</organism>